<feature type="signal peptide" evidence="2">
    <location>
        <begin position="1"/>
        <end position="20"/>
    </location>
</feature>
<feature type="chain" id="PRO_0000031742" description="Multiple sugar-binding periplasmic protein SbpA">
    <location>
        <begin position="21"/>
        <end position="357"/>
    </location>
</feature>
<gene>
    <name type="primary">sbpA</name>
</gene>
<keyword id="KW-0145">Chemotaxis</keyword>
<keyword id="KW-0903">Direct protein sequencing</keyword>
<keyword id="KW-0574">Periplasm</keyword>
<keyword id="KW-0732">Signal</keyword>
<evidence type="ECO:0000250" key="1"/>
<evidence type="ECO:0000255" key="2"/>
<evidence type="ECO:0000269" key="3">
    <source>
    </source>
</evidence>
<evidence type="ECO:0000305" key="4"/>
<comment type="function">
    <text evidence="3">Mediates chemotaxis towards D-galactose, L-arabinose and D-fucose but not towards D-fructose. Probably part of a binding-protein high affinity uptake system.</text>
</comment>
<comment type="subcellular location">
    <subcellularLocation>
        <location evidence="1">Periplasm</location>
    </subcellularLocation>
</comment>
<comment type="induction">
    <text>Induced by D-galactose, L-arabinose and D-fucose. Not induced by stress conditions such as nitrogen limitation, osmotic stress, salt stress or temperature stress.</text>
</comment>
<comment type="miscellaneous">
    <text>SbpA from A.brasilense cannot complement an Agrobacterium chvE mutant with regard to vir gene expression.</text>
</comment>
<comment type="similarity">
    <text evidence="4">Belongs to the bacterial solute-binding protein 2 family.</text>
</comment>
<protein>
    <recommendedName>
        <fullName>Multiple sugar-binding periplasmic protein SbpA</fullName>
        <shortName>Sugar-binding protein A</shortName>
    </recommendedName>
</protein>
<sequence length="357" mass="38247">MSSSFTTTLAGMAVGMLVLATGTNPTLAQDKPTVGIAMPTKSSARWIDDGNNMVKQFQAKGYKTDLQYAEDDIPNQLAQIETMVAKNSKVLVIAAIDGTTLTDVLQQAKDRGVKVIAYDRLIRGSENVDYYATFDNFQVGVLQGSYIVDALGLKDGKGPFNIELFGGSPDDNNAYFFYNGAMSVLQPYIDSGKLTVGSGQVGMDKVSTLRWDGATAQARMDNLLSAFYGNRRVDAVLSPYDGISIGIISSLKGVGYGSPSQPMPVVTGQDAEVPSIKSILAGEQRATVFKDTRELARITVEMVDAVLGGGTAVNDTKTYDNGKKVVPAYLLKPVSVDASNWKGTLVDSGYYTEAQFK</sequence>
<organism>
    <name type="scientific">Azospirillum brasilense</name>
    <dbReference type="NCBI Taxonomy" id="192"/>
    <lineage>
        <taxon>Bacteria</taxon>
        <taxon>Pseudomonadati</taxon>
        <taxon>Pseudomonadota</taxon>
        <taxon>Alphaproteobacteria</taxon>
        <taxon>Rhodospirillales</taxon>
        <taxon>Azospirillaceae</taxon>
        <taxon>Azospirillum</taxon>
    </lineage>
</organism>
<name>SBPA_AZOBR</name>
<dbReference type="EMBL" id="U40823">
    <property type="protein sequence ID" value="AAA86621.1"/>
    <property type="molecule type" value="Genomic_DNA"/>
</dbReference>
<dbReference type="SMR" id="P54083"/>
<dbReference type="GO" id="GO:0030288">
    <property type="term" value="C:outer membrane-bounded periplasmic space"/>
    <property type="evidence" value="ECO:0007669"/>
    <property type="project" value="TreeGrafter"/>
</dbReference>
<dbReference type="GO" id="GO:0030246">
    <property type="term" value="F:carbohydrate binding"/>
    <property type="evidence" value="ECO:0007669"/>
    <property type="project" value="TreeGrafter"/>
</dbReference>
<dbReference type="GO" id="GO:0006935">
    <property type="term" value="P:chemotaxis"/>
    <property type="evidence" value="ECO:0007669"/>
    <property type="project" value="UniProtKB-KW"/>
</dbReference>
<dbReference type="CDD" id="cd19994">
    <property type="entry name" value="PBP1_ChvE"/>
    <property type="match status" value="1"/>
</dbReference>
<dbReference type="Gene3D" id="3.40.50.2300">
    <property type="match status" value="2"/>
</dbReference>
<dbReference type="InterPro" id="IPR050555">
    <property type="entry name" value="Bact_Solute-Bind_Prot2"/>
</dbReference>
<dbReference type="InterPro" id="IPR049784">
    <property type="entry name" value="ChvE-like"/>
</dbReference>
<dbReference type="InterPro" id="IPR028082">
    <property type="entry name" value="Peripla_BP_I"/>
</dbReference>
<dbReference type="InterPro" id="IPR025997">
    <property type="entry name" value="SBP_2_dom"/>
</dbReference>
<dbReference type="NCBIfam" id="NF040907">
    <property type="entry name" value="ChvE"/>
    <property type="match status" value="1"/>
</dbReference>
<dbReference type="PANTHER" id="PTHR30036">
    <property type="entry name" value="D-XYLOSE-BINDING PERIPLASMIC PROTEIN"/>
    <property type="match status" value="1"/>
</dbReference>
<dbReference type="PANTHER" id="PTHR30036:SF1">
    <property type="entry name" value="D-XYLOSE-BINDING PERIPLASMIC PROTEIN"/>
    <property type="match status" value="1"/>
</dbReference>
<dbReference type="Pfam" id="PF13407">
    <property type="entry name" value="Peripla_BP_4"/>
    <property type="match status" value="1"/>
</dbReference>
<dbReference type="SUPFAM" id="SSF53822">
    <property type="entry name" value="Periplasmic binding protein-like I"/>
    <property type="match status" value="1"/>
</dbReference>
<accession>P54083</accession>
<reference key="1">
    <citation type="journal article" date="1999" name="Mol. Microbiol.">
        <title>Characterization of a sugar-binding protein from Azospirillum brasilense mediating chemotaxis to and uptake of sugars.</title>
        <authorList>
            <person name="Van Bastelaere E."/>
            <person name="Lambrecht M."/>
            <person name="Vermeiren H."/>
            <person name="Van Dommelen A."/>
            <person name="Keijers V."/>
            <person name="Proost P."/>
            <person name="Vanderleyden J."/>
        </authorList>
    </citation>
    <scope>NUCLEOTIDE SEQUENCE [GENOMIC DNA]</scope>
    <scope>PROTEIN SEQUENCE OF 83-101 AND 164-169</scope>
    <scope>FUNCTION IN CHEMOTAXIS TOWARDS SUGARS</scope>
    <source>
        <strain>ATCC 29145 / DSM 1690 / IMET 11303 / Sp7</strain>
    </source>
</reference>
<proteinExistence type="evidence at protein level"/>